<keyword id="KW-0028">Amino-acid biosynthesis</keyword>
<keyword id="KW-0067">ATP-binding</keyword>
<keyword id="KW-0963">Cytoplasm</keyword>
<keyword id="KW-0368">Histidine biosynthesis</keyword>
<keyword id="KW-0378">Hydrolase</keyword>
<keyword id="KW-0547">Nucleotide-binding</keyword>
<keyword id="KW-1185">Reference proteome</keyword>
<sequence>MTQSTEDTLLRLAGVIDSRKGGDPEQSYVSRLFHKGDDAVLKKIGEEATEVVLAAKDVRQGGAPSALVGEVADLWFHCLVMLSHFDLSPADVIAELERREGLSGIEEKALRKRREREANGG</sequence>
<protein>
    <recommendedName>
        <fullName evidence="1">Phosphoribosyl-ATP pyrophosphatase</fullName>
        <shortName evidence="1">PRA-PH</shortName>
        <ecNumber evidence="1">3.6.1.31</ecNumber>
    </recommendedName>
</protein>
<accession>Q845U5</accession>
<accession>A9AE09</accession>
<dbReference type="EC" id="3.6.1.31" evidence="1"/>
<dbReference type="EMBL" id="AB091436">
    <property type="protein sequence ID" value="BAC65278.1"/>
    <property type="molecule type" value="Genomic_DNA"/>
</dbReference>
<dbReference type="EMBL" id="CP000868">
    <property type="protein sequence ID" value="ABX14031.1"/>
    <property type="molecule type" value="Genomic_DNA"/>
</dbReference>
<dbReference type="EMBL" id="AP009385">
    <property type="protein sequence ID" value="BAG44803.1"/>
    <property type="molecule type" value="Genomic_DNA"/>
</dbReference>
<dbReference type="RefSeq" id="WP_006400576.1">
    <property type="nucleotide sequence ID" value="NC_010804.1"/>
</dbReference>
<dbReference type="SMR" id="Q845U5"/>
<dbReference type="STRING" id="395019.BMULJ_02918"/>
<dbReference type="KEGG" id="bmj:BMULJ_02918"/>
<dbReference type="KEGG" id="bmu:Bmul_0336"/>
<dbReference type="eggNOG" id="COG0140">
    <property type="taxonomic scope" value="Bacteria"/>
</dbReference>
<dbReference type="HOGENOM" id="CLU_123337_1_2_4"/>
<dbReference type="UniPathway" id="UPA00031">
    <property type="reaction ID" value="UER00007"/>
</dbReference>
<dbReference type="Proteomes" id="UP000008815">
    <property type="component" value="Chromosome 1"/>
</dbReference>
<dbReference type="GO" id="GO:0005737">
    <property type="term" value="C:cytoplasm"/>
    <property type="evidence" value="ECO:0007669"/>
    <property type="project" value="UniProtKB-SubCell"/>
</dbReference>
<dbReference type="GO" id="GO:0005524">
    <property type="term" value="F:ATP binding"/>
    <property type="evidence" value="ECO:0007669"/>
    <property type="project" value="UniProtKB-KW"/>
</dbReference>
<dbReference type="GO" id="GO:0004636">
    <property type="term" value="F:phosphoribosyl-ATP diphosphatase activity"/>
    <property type="evidence" value="ECO:0007669"/>
    <property type="project" value="UniProtKB-UniRule"/>
</dbReference>
<dbReference type="GO" id="GO:0000105">
    <property type="term" value="P:L-histidine biosynthetic process"/>
    <property type="evidence" value="ECO:0007669"/>
    <property type="project" value="UniProtKB-UniRule"/>
</dbReference>
<dbReference type="CDD" id="cd11534">
    <property type="entry name" value="NTP-PPase_HisIE_like"/>
    <property type="match status" value="1"/>
</dbReference>
<dbReference type="Gene3D" id="1.10.287.1080">
    <property type="entry name" value="MazG-like"/>
    <property type="match status" value="1"/>
</dbReference>
<dbReference type="HAMAP" id="MF_01020">
    <property type="entry name" value="HisE"/>
    <property type="match status" value="1"/>
</dbReference>
<dbReference type="InterPro" id="IPR008179">
    <property type="entry name" value="HisE"/>
</dbReference>
<dbReference type="InterPro" id="IPR021130">
    <property type="entry name" value="PRib-ATP_PPHydrolase-like"/>
</dbReference>
<dbReference type="NCBIfam" id="TIGR03188">
    <property type="entry name" value="histidine_hisI"/>
    <property type="match status" value="1"/>
</dbReference>
<dbReference type="NCBIfam" id="NF001611">
    <property type="entry name" value="PRK00400.1-3"/>
    <property type="match status" value="1"/>
</dbReference>
<dbReference type="PANTHER" id="PTHR42945">
    <property type="entry name" value="HISTIDINE BIOSYNTHESIS BIFUNCTIONAL PROTEIN"/>
    <property type="match status" value="1"/>
</dbReference>
<dbReference type="PANTHER" id="PTHR42945:SF9">
    <property type="entry name" value="HISTIDINE BIOSYNTHESIS BIFUNCTIONAL PROTEIN HISIE"/>
    <property type="match status" value="1"/>
</dbReference>
<dbReference type="Pfam" id="PF01503">
    <property type="entry name" value="PRA-PH"/>
    <property type="match status" value="1"/>
</dbReference>
<dbReference type="SUPFAM" id="SSF101386">
    <property type="entry name" value="all-alpha NTP pyrophosphatases"/>
    <property type="match status" value="1"/>
</dbReference>
<comment type="catalytic activity">
    <reaction evidence="1">
        <text>1-(5-phospho-beta-D-ribosyl)-ATP + H2O = 1-(5-phospho-beta-D-ribosyl)-5'-AMP + diphosphate + H(+)</text>
        <dbReference type="Rhea" id="RHEA:22828"/>
        <dbReference type="ChEBI" id="CHEBI:15377"/>
        <dbReference type="ChEBI" id="CHEBI:15378"/>
        <dbReference type="ChEBI" id="CHEBI:33019"/>
        <dbReference type="ChEBI" id="CHEBI:59457"/>
        <dbReference type="ChEBI" id="CHEBI:73183"/>
        <dbReference type="EC" id="3.6.1.31"/>
    </reaction>
</comment>
<comment type="pathway">
    <text evidence="1">Amino-acid biosynthesis; L-histidine biosynthesis; L-histidine from 5-phospho-alpha-D-ribose 1-diphosphate: step 2/9.</text>
</comment>
<comment type="subcellular location">
    <subcellularLocation>
        <location evidence="1">Cytoplasm</location>
    </subcellularLocation>
</comment>
<comment type="similarity">
    <text evidence="1">Belongs to the PRA-PH family.</text>
</comment>
<feature type="chain" id="PRO_0000136354" description="Phosphoribosyl-ATP pyrophosphatase">
    <location>
        <begin position="1"/>
        <end position="121"/>
    </location>
</feature>
<proteinExistence type="inferred from homology"/>
<organism>
    <name type="scientific">Burkholderia multivorans (strain ATCC 17616 / 249)</name>
    <dbReference type="NCBI Taxonomy" id="395019"/>
    <lineage>
        <taxon>Bacteria</taxon>
        <taxon>Pseudomonadati</taxon>
        <taxon>Pseudomonadota</taxon>
        <taxon>Betaproteobacteria</taxon>
        <taxon>Burkholderiales</taxon>
        <taxon>Burkholderiaceae</taxon>
        <taxon>Burkholderia</taxon>
        <taxon>Burkholderia cepacia complex</taxon>
    </lineage>
</organism>
<evidence type="ECO:0000255" key="1">
    <source>
        <dbReference type="HAMAP-Rule" id="MF_01020"/>
    </source>
</evidence>
<gene>
    <name evidence="1" type="primary">hisE</name>
    <name type="ordered locus">Bmul_0336</name>
    <name type="ordered locus">BMULJ_02918</name>
</gene>
<name>HIS2_BURM1</name>
<reference key="1">
    <citation type="journal article" date="2003" name="J. Bacteriol.">
        <title>Distribution and organization of auxotrophic genes on the multichromosomal genome of Burkholderia multivorans ATCC 17616.</title>
        <authorList>
            <person name="Komatsu H."/>
            <person name="Imura Y."/>
            <person name="Ohori A."/>
            <person name="Nagata Y."/>
            <person name="Tsuda M."/>
        </authorList>
    </citation>
    <scope>NUCLEOTIDE SEQUENCE [GENOMIC DNA]</scope>
</reference>
<reference key="2">
    <citation type="submission" date="2007-10" db="EMBL/GenBank/DDBJ databases">
        <title>Complete sequence of chromosome 1 of Burkholderia multivorans ATCC 17616.</title>
        <authorList>
            <person name="Copeland A."/>
            <person name="Lucas S."/>
            <person name="Lapidus A."/>
            <person name="Barry K."/>
            <person name="Glavina del Rio T."/>
            <person name="Dalin E."/>
            <person name="Tice H."/>
            <person name="Pitluck S."/>
            <person name="Chain P."/>
            <person name="Malfatti S."/>
            <person name="Shin M."/>
            <person name="Vergez L."/>
            <person name="Schmutz J."/>
            <person name="Larimer F."/>
            <person name="Land M."/>
            <person name="Hauser L."/>
            <person name="Kyrpides N."/>
            <person name="Kim E."/>
            <person name="Tiedje J."/>
            <person name="Richardson P."/>
        </authorList>
    </citation>
    <scope>NUCLEOTIDE SEQUENCE [LARGE SCALE GENOMIC DNA]</scope>
    <source>
        <strain>ATCC 17616 / 249</strain>
    </source>
</reference>
<reference key="3">
    <citation type="submission" date="2007-04" db="EMBL/GenBank/DDBJ databases">
        <title>Complete genome sequence of Burkholderia multivorans ATCC 17616.</title>
        <authorList>
            <person name="Ohtsubo Y."/>
            <person name="Yamashita A."/>
            <person name="Kurokawa K."/>
            <person name="Takami H."/>
            <person name="Yuhara S."/>
            <person name="Nishiyama E."/>
            <person name="Endo R."/>
            <person name="Miyazaki R."/>
            <person name="Ono A."/>
            <person name="Yano K."/>
            <person name="Ito M."/>
            <person name="Sota M."/>
            <person name="Yuji N."/>
            <person name="Hattori M."/>
            <person name="Tsuda M."/>
        </authorList>
    </citation>
    <scope>NUCLEOTIDE SEQUENCE [LARGE SCALE GENOMIC DNA]</scope>
    <source>
        <strain>ATCC 17616 / 249</strain>
    </source>
</reference>